<keyword id="KW-0028">Amino-acid biosynthesis</keyword>
<keyword id="KW-0100">Branched-chain amino acid biosynthesis</keyword>
<keyword id="KW-0963">Cytoplasm</keyword>
<keyword id="KW-0432">Leucine biosynthesis</keyword>
<keyword id="KW-0464">Manganese</keyword>
<keyword id="KW-0479">Metal-binding</keyword>
<keyword id="KW-1185">Reference proteome</keyword>
<keyword id="KW-0808">Transferase</keyword>
<proteinExistence type="inferred from homology"/>
<feature type="chain" id="PRO_1000149254" description="2-isopropylmalate synthase">
    <location>
        <begin position="1"/>
        <end position="513"/>
    </location>
</feature>
<feature type="domain" description="Pyruvate carboxyltransferase" evidence="1">
    <location>
        <begin position="5"/>
        <end position="268"/>
    </location>
</feature>
<feature type="region of interest" description="Regulatory domain" evidence="1">
    <location>
        <begin position="394"/>
        <end position="513"/>
    </location>
</feature>
<feature type="binding site" evidence="1">
    <location>
        <position position="14"/>
    </location>
    <ligand>
        <name>Mn(2+)</name>
        <dbReference type="ChEBI" id="CHEBI:29035"/>
    </ligand>
</feature>
<feature type="binding site" evidence="1">
    <location>
        <position position="202"/>
    </location>
    <ligand>
        <name>Mn(2+)</name>
        <dbReference type="ChEBI" id="CHEBI:29035"/>
    </ligand>
</feature>
<feature type="binding site" evidence="1">
    <location>
        <position position="204"/>
    </location>
    <ligand>
        <name>Mn(2+)</name>
        <dbReference type="ChEBI" id="CHEBI:29035"/>
    </ligand>
</feature>
<feature type="binding site" evidence="1">
    <location>
        <position position="239"/>
    </location>
    <ligand>
        <name>Mn(2+)</name>
        <dbReference type="ChEBI" id="CHEBI:29035"/>
    </ligand>
</feature>
<name>LEU1_CUPMC</name>
<dbReference type="EC" id="2.3.3.13" evidence="1"/>
<dbReference type="EMBL" id="CP000352">
    <property type="protein sequence ID" value="ABF07804.1"/>
    <property type="molecule type" value="Genomic_DNA"/>
</dbReference>
<dbReference type="RefSeq" id="WP_008643333.1">
    <property type="nucleotide sequence ID" value="NC_007973.1"/>
</dbReference>
<dbReference type="SMR" id="Q1LPX2"/>
<dbReference type="STRING" id="266264.Rmet_0918"/>
<dbReference type="KEGG" id="rme:Rmet_0918"/>
<dbReference type="eggNOG" id="COG0119">
    <property type="taxonomic scope" value="Bacteria"/>
</dbReference>
<dbReference type="HOGENOM" id="CLU_022158_0_1_4"/>
<dbReference type="UniPathway" id="UPA00048">
    <property type="reaction ID" value="UER00070"/>
</dbReference>
<dbReference type="Proteomes" id="UP000002429">
    <property type="component" value="Chromosome"/>
</dbReference>
<dbReference type="GO" id="GO:0005829">
    <property type="term" value="C:cytosol"/>
    <property type="evidence" value="ECO:0007669"/>
    <property type="project" value="TreeGrafter"/>
</dbReference>
<dbReference type="GO" id="GO:0003852">
    <property type="term" value="F:2-isopropylmalate synthase activity"/>
    <property type="evidence" value="ECO:0007669"/>
    <property type="project" value="UniProtKB-UniRule"/>
</dbReference>
<dbReference type="GO" id="GO:0003985">
    <property type="term" value="F:acetyl-CoA C-acetyltransferase activity"/>
    <property type="evidence" value="ECO:0007669"/>
    <property type="project" value="UniProtKB-UniRule"/>
</dbReference>
<dbReference type="GO" id="GO:0030145">
    <property type="term" value="F:manganese ion binding"/>
    <property type="evidence" value="ECO:0007669"/>
    <property type="project" value="UniProtKB-UniRule"/>
</dbReference>
<dbReference type="GO" id="GO:0009098">
    <property type="term" value="P:L-leucine biosynthetic process"/>
    <property type="evidence" value="ECO:0007669"/>
    <property type="project" value="UniProtKB-UniRule"/>
</dbReference>
<dbReference type="CDD" id="cd07940">
    <property type="entry name" value="DRE_TIM_IPMS"/>
    <property type="match status" value="1"/>
</dbReference>
<dbReference type="FunFam" id="1.10.238.260:FF:000001">
    <property type="entry name" value="2-isopropylmalate synthase"/>
    <property type="match status" value="1"/>
</dbReference>
<dbReference type="FunFam" id="3.20.20.70:FF:000010">
    <property type="entry name" value="2-isopropylmalate synthase"/>
    <property type="match status" value="1"/>
</dbReference>
<dbReference type="FunFam" id="3.30.160.270:FF:000003">
    <property type="entry name" value="2-isopropylmalate synthase"/>
    <property type="match status" value="1"/>
</dbReference>
<dbReference type="Gene3D" id="1.10.238.260">
    <property type="match status" value="1"/>
</dbReference>
<dbReference type="Gene3D" id="3.30.160.270">
    <property type="match status" value="1"/>
</dbReference>
<dbReference type="Gene3D" id="3.20.20.70">
    <property type="entry name" value="Aldolase class I"/>
    <property type="match status" value="1"/>
</dbReference>
<dbReference type="HAMAP" id="MF_01025">
    <property type="entry name" value="LeuA_type1"/>
    <property type="match status" value="1"/>
</dbReference>
<dbReference type="InterPro" id="IPR050073">
    <property type="entry name" value="2-IPM_HCS-like"/>
</dbReference>
<dbReference type="InterPro" id="IPR013709">
    <property type="entry name" value="2-isopropylmalate_synth_dimer"/>
</dbReference>
<dbReference type="InterPro" id="IPR002034">
    <property type="entry name" value="AIPM/Hcit_synth_CS"/>
</dbReference>
<dbReference type="InterPro" id="IPR013785">
    <property type="entry name" value="Aldolase_TIM"/>
</dbReference>
<dbReference type="InterPro" id="IPR054691">
    <property type="entry name" value="LeuA/HCS_post-cat"/>
</dbReference>
<dbReference type="InterPro" id="IPR036230">
    <property type="entry name" value="LeuA_allosteric_dom_sf"/>
</dbReference>
<dbReference type="InterPro" id="IPR005671">
    <property type="entry name" value="LeuA_bact_synth"/>
</dbReference>
<dbReference type="InterPro" id="IPR000891">
    <property type="entry name" value="PYR_CT"/>
</dbReference>
<dbReference type="NCBIfam" id="TIGR00973">
    <property type="entry name" value="leuA_bact"/>
    <property type="match status" value="1"/>
</dbReference>
<dbReference type="NCBIfam" id="NF002086">
    <property type="entry name" value="PRK00915.1-3"/>
    <property type="match status" value="1"/>
</dbReference>
<dbReference type="NCBIfam" id="NF002087">
    <property type="entry name" value="PRK00915.1-4"/>
    <property type="match status" value="1"/>
</dbReference>
<dbReference type="PANTHER" id="PTHR10277:SF9">
    <property type="entry name" value="2-ISOPROPYLMALATE SYNTHASE 1, CHLOROPLASTIC-RELATED"/>
    <property type="match status" value="1"/>
</dbReference>
<dbReference type="PANTHER" id="PTHR10277">
    <property type="entry name" value="HOMOCITRATE SYNTHASE-RELATED"/>
    <property type="match status" value="1"/>
</dbReference>
<dbReference type="Pfam" id="PF22617">
    <property type="entry name" value="HCS_D2"/>
    <property type="match status" value="1"/>
</dbReference>
<dbReference type="Pfam" id="PF00682">
    <property type="entry name" value="HMGL-like"/>
    <property type="match status" value="1"/>
</dbReference>
<dbReference type="Pfam" id="PF08502">
    <property type="entry name" value="LeuA_dimer"/>
    <property type="match status" value="1"/>
</dbReference>
<dbReference type="SMART" id="SM00917">
    <property type="entry name" value="LeuA_dimer"/>
    <property type="match status" value="1"/>
</dbReference>
<dbReference type="SUPFAM" id="SSF110921">
    <property type="entry name" value="2-isopropylmalate synthase LeuA, allosteric (dimerisation) domain"/>
    <property type="match status" value="1"/>
</dbReference>
<dbReference type="SUPFAM" id="SSF51569">
    <property type="entry name" value="Aldolase"/>
    <property type="match status" value="1"/>
</dbReference>
<dbReference type="PROSITE" id="PS00815">
    <property type="entry name" value="AIPM_HOMOCIT_SYNTH_1"/>
    <property type="match status" value="1"/>
</dbReference>
<dbReference type="PROSITE" id="PS00816">
    <property type="entry name" value="AIPM_HOMOCIT_SYNTH_2"/>
    <property type="match status" value="1"/>
</dbReference>
<dbReference type="PROSITE" id="PS50991">
    <property type="entry name" value="PYR_CT"/>
    <property type="match status" value="1"/>
</dbReference>
<gene>
    <name evidence="1" type="primary">leuA</name>
    <name type="ordered locus">Rmet_0918</name>
</gene>
<comment type="function">
    <text evidence="1">Catalyzes the condensation of the acetyl group of acetyl-CoA with 3-methyl-2-oxobutanoate (2-ketoisovalerate) to form 3-carboxy-3-hydroxy-4-methylpentanoate (2-isopropylmalate).</text>
</comment>
<comment type="catalytic activity">
    <reaction evidence="1">
        <text>3-methyl-2-oxobutanoate + acetyl-CoA + H2O = (2S)-2-isopropylmalate + CoA + H(+)</text>
        <dbReference type="Rhea" id="RHEA:21524"/>
        <dbReference type="ChEBI" id="CHEBI:1178"/>
        <dbReference type="ChEBI" id="CHEBI:11851"/>
        <dbReference type="ChEBI" id="CHEBI:15377"/>
        <dbReference type="ChEBI" id="CHEBI:15378"/>
        <dbReference type="ChEBI" id="CHEBI:57287"/>
        <dbReference type="ChEBI" id="CHEBI:57288"/>
        <dbReference type="EC" id="2.3.3.13"/>
    </reaction>
</comment>
<comment type="cofactor">
    <cofactor evidence="1">
        <name>Mn(2+)</name>
        <dbReference type="ChEBI" id="CHEBI:29035"/>
    </cofactor>
</comment>
<comment type="pathway">
    <text evidence="1">Amino-acid biosynthesis; L-leucine biosynthesis; L-leucine from 3-methyl-2-oxobutanoate: step 1/4.</text>
</comment>
<comment type="subunit">
    <text evidence="1">Homodimer.</text>
</comment>
<comment type="subcellular location">
    <subcellularLocation>
        <location evidence="1">Cytoplasm</location>
    </subcellularLocation>
</comment>
<comment type="similarity">
    <text evidence="1">Belongs to the alpha-IPM synthase/homocitrate synthase family. LeuA type 1 subfamily.</text>
</comment>
<organism>
    <name type="scientific">Cupriavidus metallidurans (strain ATCC 43123 / DSM 2839 / NBRC 102507 / CH34)</name>
    <name type="common">Ralstonia metallidurans</name>
    <dbReference type="NCBI Taxonomy" id="266264"/>
    <lineage>
        <taxon>Bacteria</taxon>
        <taxon>Pseudomonadati</taxon>
        <taxon>Pseudomonadota</taxon>
        <taxon>Betaproteobacteria</taxon>
        <taxon>Burkholderiales</taxon>
        <taxon>Burkholderiaceae</taxon>
        <taxon>Cupriavidus</taxon>
    </lineage>
</organism>
<evidence type="ECO:0000255" key="1">
    <source>
        <dbReference type="HAMAP-Rule" id="MF_01025"/>
    </source>
</evidence>
<accession>Q1LPX2</accession>
<sequence>MSDKLIIFDTTLRDGEQSPGASMTREEKIRIARQLERLKVDVIEAGFAASSNGDFEAIRSIAQVVKDSTICSLARANDKDIARAAEALKPANSFRIHTFIATSALHMEKKLRMTPDQVYEQARLAVRFARQFTDDIEFSPEDGSRSDMDFLCRVLEGVIAEGATTINLPDTVGYAVPEGYAELIRSVRERIPNSDKAVWSVHCHNDLGMAVANSLAAVKLGGARQIECTINGLGERAGNTSLEEVVMAVKTRRDYFNMDVGIDTTQIVPASKLVSQITGFVVQPNKAVVGANAFAHASGIHQDGVLKARDTYEIMRAEDVGWTANKIVLGKLSGRNAFKQRLQELGVQLESEAEINAAFARFKELADQKAEIFDEDIMAIVSDEEQEHANEHYRFISLSQRSETGERPHARVVFNIDGSEQTGEAEGNGPVDATLHAIEGKVNSGAELVLYSVNAITAGTQAQGEVTVRLSKAGRIVNGVGTDPDIVAASAKAYLAALNKLHDKAVQKINPQI</sequence>
<protein>
    <recommendedName>
        <fullName evidence="1">2-isopropylmalate synthase</fullName>
        <ecNumber evidence="1">2.3.3.13</ecNumber>
    </recommendedName>
    <alternativeName>
        <fullName evidence="1">Alpha-IPM synthase</fullName>
    </alternativeName>
    <alternativeName>
        <fullName evidence="1">Alpha-isopropylmalate synthase</fullName>
    </alternativeName>
</protein>
<reference key="1">
    <citation type="journal article" date="2010" name="PLoS ONE">
        <title>The complete genome sequence of Cupriavidus metallidurans strain CH34, a master survivalist in harsh and anthropogenic environments.</title>
        <authorList>
            <person name="Janssen P.J."/>
            <person name="Van Houdt R."/>
            <person name="Moors H."/>
            <person name="Monsieurs P."/>
            <person name="Morin N."/>
            <person name="Michaux A."/>
            <person name="Benotmane M.A."/>
            <person name="Leys N."/>
            <person name="Vallaeys T."/>
            <person name="Lapidus A."/>
            <person name="Monchy S."/>
            <person name="Medigue C."/>
            <person name="Taghavi S."/>
            <person name="McCorkle S."/>
            <person name="Dunn J."/>
            <person name="van der Lelie D."/>
            <person name="Mergeay M."/>
        </authorList>
    </citation>
    <scope>NUCLEOTIDE SEQUENCE [LARGE SCALE GENOMIC DNA]</scope>
    <source>
        <strain>ATCC 43123 / DSM 2839 / NBRC 102507 / CH34</strain>
    </source>
</reference>